<comment type="function">
    <text evidence="1 5">The phosphorylation of phosphatidylinositol (PI) to PI4P is the first committed step in the generation of phosphatidylinositol 4,5-bisphosphate (PIP2), a precursor of the second messenger inositol 1,4,5-trisphosphate (InsP3) (By similarity). Undergoes autophosphorylation and phosphorylates serine/threonine residues of protein substrates (PubMed:17880284). Phosphorylates RPN10 and UFD1 in vitro (PubMed:17880284).</text>
</comment>
<comment type="catalytic activity">
    <reaction evidence="5">
        <text>a 1,2-diacyl-sn-glycero-3-phospho-(1D-myo-inositol) + ATP = a 1,2-diacyl-sn-glycero-3-phospho-(1D-myo-inositol 4-phosphate) + ADP + H(+)</text>
        <dbReference type="Rhea" id="RHEA:19877"/>
        <dbReference type="ChEBI" id="CHEBI:15378"/>
        <dbReference type="ChEBI" id="CHEBI:30616"/>
        <dbReference type="ChEBI" id="CHEBI:57880"/>
        <dbReference type="ChEBI" id="CHEBI:58178"/>
        <dbReference type="ChEBI" id="CHEBI:456216"/>
        <dbReference type="EC" id="2.7.1.67"/>
    </reaction>
    <physiologicalReaction direction="left-to-right" evidence="5">
        <dbReference type="Rhea" id="RHEA:19878"/>
    </physiologicalReaction>
</comment>
<comment type="subunit">
    <text evidence="5">Interacts with RPN10, UFD1 and CDC48 in vitro.</text>
</comment>
<comment type="subcellular location">
    <subcellularLocation>
        <location evidence="6">Membrane</location>
        <topology evidence="6">Peripheral membrane protein</topology>
        <orientation evidence="6">Cytoplasmic side</orientation>
    </subcellularLocation>
</comment>
<comment type="alternative products">
    <event type="alternative splicing"/>
    <isoform>
        <id>Q9ZPY9-1</id>
        <name>1</name>
        <sequence type="displayed"/>
    </isoform>
    <text>A number of isoforms are produced. According to EST sequences.</text>
</comment>
<comment type="induction">
    <text evidence="6">By salt.</text>
</comment>
<comment type="PTM">
    <text>Autophosphorylated.</text>
</comment>
<comment type="similarity">
    <text evidence="8">Belongs to the PI3/PI4-kinase family. Type II PI4K subfamily.</text>
</comment>
<sequence length="566" mass="62625">MSSAGVALSPVRSEPLIMPLVRANSCLDSYPDDTIMIYLTLPGSVIPMRVLESDSIESVKLRIQSYRGFVVRNQKLVFGGRELARSNSNMRDYGVSEGNILHLVLKLSDLQVLDVKTTCGKHCRFHVERGRNIGYVKKQISKKRGDFVDPDEQEILYEGEKLEDQSLINDICRNDDSVLHLLVRRSAKVRVKPVEKNFELSIVAPQAKDKKGREAKSIVPPKKLSLEPVVVNSKAKVPLVVKDMIQSASDGLKSGNSPVRSSEGTGGAYFMQGPSGNKFVGVFKPIDEEPMAENNPQGLPLSPNGEGLKKGTKVGEGALREVAAYILDHPKSGNKSMFGEEIGFAGVPPTAMIECLHPGFNHPKGIKTKIGSLQMFTENDGSCEDMGPLSFPVEEVHKISVLDIRLANADRHGGNILMTKDESGKLVLVPIDHGYCLPESFEDCTFEWLYWPQARKPYSAETQEYIRSLDAEEDIDLLKFHGWKMPAETAQTLRISTMLLKKGVERGLTAFEIGTIMCRETLSKKSLVEEMVEEAQEAVLPGTSEAAFLEALSDVMDYHLDHSQEH</sequence>
<evidence type="ECO:0000250" key="1">
    <source>
        <dbReference type="UniProtKB" id="Q9BTU6"/>
    </source>
</evidence>
<evidence type="ECO:0000255" key="2">
    <source>
        <dbReference type="PROSITE-ProRule" id="PRU00214"/>
    </source>
</evidence>
<evidence type="ECO:0000255" key="3">
    <source>
        <dbReference type="PROSITE-ProRule" id="PRU00269"/>
    </source>
</evidence>
<evidence type="ECO:0000256" key="4">
    <source>
        <dbReference type="SAM" id="MobiDB-lite"/>
    </source>
</evidence>
<evidence type="ECO:0000269" key="5">
    <source>
    </source>
</evidence>
<evidence type="ECO:0000269" key="6">
    <source>
    </source>
</evidence>
<evidence type="ECO:0000303" key="7">
    <source>
    </source>
</evidence>
<evidence type="ECO:0000305" key="8"/>
<evidence type="ECO:0000312" key="9">
    <source>
        <dbReference type="Araport" id="AT2G46500"/>
    </source>
</evidence>
<evidence type="ECO:0000312" key="10">
    <source>
        <dbReference type="EMBL" id="AAD20161.1"/>
    </source>
</evidence>
<evidence type="ECO:0000312" key="11">
    <source>
        <dbReference type="EMBL" id="AAM15268.1"/>
    </source>
</evidence>
<feature type="chain" id="PRO_0000423362" description="Phosphatidylinositol 4-kinase gamma 4">
    <location>
        <begin position="1"/>
        <end position="566"/>
    </location>
</feature>
<feature type="domain" description="Ubiquitin-like 1" evidence="2">
    <location>
        <begin position="34"/>
        <end position="111"/>
    </location>
</feature>
<feature type="domain" description="Ubiquitin-like 2" evidence="2">
    <location>
        <begin position="112"/>
        <end position="190"/>
    </location>
</feature>
<feature type="domain" description="PI3K/PI4K catalytic" evidence="3">
    <location>
        <begin position="255"/>
        <end position="547"/>
    </location>
</feature>
<feature type="region of interest" description="Disordered" evidence="4">
    <location>
        <begin position="250"/>
        <end position="272"/>
    </location>
</feature>
<feature type="region of interest" description="G-loop" evidence="3">
    <location>
        <begin position="261"/>
        <end position="267"/>
    </location>
</feature>
<feature type="region of interest" description="Catalytic loop" evidence="3">
    <location>
        <begin position="407"/>
        <end position="415"/>
    </location>
</feature>
<feature type="region of interest" description="Activation loop" evidence="3">
    <location>
        <begin position="430"/>
        <end position="456"/>
    </location>
</feature>
<feature type="compositionally biased region" description="Polar residues" evidence="4">
    <location>
        <begin position="250"/>
        <end position="263"/>
    </location>
</feature>
<feature type="binding site" evidence="1">
    <location>
        <begin position="262"/>
        <end position="268"/>
    </location>
    <ligand>
        <name>ATP</name>
        <dbReference type="ChEBI" id="CHEBI:30616"/>
    </ligand>
</feature>
<feature type="binding site" evidence="1">
    <location>
        <position position="284"/>
    </location>
    <ligand>
        <name>ATP</name>
        <dbReference type="ChEBI" id="CHEBI:30616"/>
    </ligand>
</feature>
<feature type="binding site" evidence="1">
    <location>
        <begin position="374"/>
        <end position="377"/>
    </location>
    <ligand>
        <name>ATP</name>
        <dbReference type="ChEBI" id="CHEBI:30616"/>
    </ligand>
</feature>
<feature type="binding site" evidence="1">
    <location>
        <position position="432"/>
    </location>
    <ligand>
        <name>ATP</name>
        <dbReference type="ChEBI" id="CHEBI:30616"/>
    </ligand>
</feature>
<feature type="mutagenesis site" description="Abolishes protein kinase activity." evidence="5">
    <original>K</original>
    <variation>A</variation>
    <location>
        <position position="284"/>
    </location>
</feature>
<feature type="sequence conflict" description="In Ref. 4; BAH19960." evidence="8" ref="4">
    <original>D</original>
    <variation>G</variation>
    <location>
        <position position="170"/>
    </location>
</feature>
<keyword id="KW-0025">Alternative splicing</keyword>
<keyword id="KW-0067">ATP-binding</keyword>
<keyword id="KW-0418">Kinase</keyword>
<keyword id="KW-0472">Membrane</keyword>
<keyword id="KW-0547">Nucleotide-binding</keyword>
<keyword id="KW-0597">Phosphoprotein</keyword>
<keyword id="KW-1185">Reference proteome</keyword>
<keyword id="KW-0677">Repeat</keyword>
<keyword id="KW-0808">Transferase</keyword>
<proteinExistence type="evidence at protein level"/>
<reference key="1">
    <citation type="journal article" date="1999" name="Nature">
        <title>Sequence and analysis of chromosome 2 of the plant Arabidopsis thaliana.</title>
        <authorList>
            <person name="Lin X."/>
            <person name="Kaul S."/>
            <person name="Rounsley S.D."/>
            <person name="Shea T.P."/>
            <person name="Benito M.-I."/>
            <person name="Town C.D."/>
            <person name="Fujii C.Y."/>
            <person name="Mason T.M."/>
            <person name="Bowman C.L."/>
            <person name="Barnstead M.E."/>
            <person name="Feldblyum T.V."/>
            <person name="Buell C.R."/>
            <person name="Ketchum K.A."/>
            <person name="Lee J.J."/>
            <person name="Ronning C.M."/>
            <person name="Koo H.L."/>
            <person name="Moffat K.S."/>
            <person name="Cronin L.A."/>
            <person name="Shen M."/>
            <person name="Pai G."/>
            <person name="Van Aken S."/>
            <person name="Umayam L."/>
            <person name="Tallon L.J."/>
            <person name="Gill J.E."/>
            <person name="Adams M.D."/>
            <person name="Carrera A.J."/>
            <person name="Creasy T.H."/>
            <person name="Goodman H.M."/>
            <person name="Somerville C.R."/>
            <person name="Copenhaver G.P."/>
            <person name="Preuss D."/>
            <person name="Nierman W.C."/>
            <person name="White O."/>
            <person name="Eisen J.A."/>
            <person name="Salzberg S.L."/>
            <person name="Fraser C.M."/>
            <person name="Venter J.C."/>
        </authorList>
    </citation>
    <scope>NUCLEOTIDE SEQUENCE [LARGE SCALE GENOMIC DNA]</scope>
    <source>
        <strain>cv. Columbia</strain>
    </source>
</reference>
<reference key="2">
    <citation type="journal article" date="2017" name="Plant J.">
        <title>Araport11: a complete reannotation of the Arabidopsis thaliana reference genome.</title>
        <authorList>
            <person name="Cheng C.Y."/>
            <person name="Krishnakumar V."/>
            <person name="Chan A.P."/>
            <person name="Thibaud-Nissen F."/>
            <person name="Schobel S."/>
            <person name="Town C.D."/>
        </authorList>
    </citation>
    <scope>GENOME REANNOTATION</scope>
    <source>
        <strain>cv. Columbia</strain>
    </source>
</reference>
<reference key="3">
    <citation type="journal article" date="2003" name="Science">
        <title>Empirical analysis of transcriptional activity in the Arabidopsis genome.</title>
        <authorList>
            <person name="Yamada K."/>
            <person name="Lim J."/>
            <person name="Dale J.M."/>
            <person name="Chen H."/>
            <person name="Shinn P."/>
            <person name="Palm C.J."/>
            <person name="Southwick A.M."/>
            <person name="Wu H.C."/>
            <person name="Kim C.J."/>
            <person name="Nguyen M."/>
            <person name="Pham P.K."/>
            <person name="Cheuk R.F."/>
            <person name="Karlin-Newmann G."/>
            <person name="Liu S.X."/>
            <person name="Lam B."/>
            <person name="Sakano H."/>
            <person name="Wu T."/>
            <person name="Yu G."/>
            <person name="Miranda M."/>
            <person name="Quach H.L."/>
            <person name="Tripp M."/>
            <person name="Chang C.H."/>
            <person name="Lee J.M."/>
            <person name="Toriumi M.J."/>
            <person name="Chan M.M."/>
            <person name="Tang C.C."/>
            <person name="Onodera C.S."/>
            <person name="Deng J.M."/>
            <person name="Akiyama K."/>
            <person name="Ansari Y."/>
            <person name="Arakawa T."/>
            <person name="Banh J."/>
            <person name="Banno F."/>
            <person name="Bowser L."/>
            <person name="Brooks S.Y."/>
            <person name="Carninci P."/>
            <person name="Chao Q."/>
            <person name="Choy N."/>
            <person name="Enju A."/>
            <person name="Goldsmith A.D."/>
            <person name="Gurjal M."/>
            <person name="Hansen N.F."/>
            <person name="Hayashizaki Y."/>
            <person name="Johnson-Hopson C."/>
            <person name="Hsuan V.W."/>
            <person name="Iida K."/>
            <person name="Karnes M."/>
            <person name="Khan S."/>
            <person name="Koesema E."/>
            <person name="Ishida J."/>
            <person name="Jiang P.X."/>
            <person name="Jones T."/>
            <person name="Kawai J."/>
            <person name="Kamiya A."/>
            <person name="Meyers C."/>
            <person name="Nakajima M."/>
            <person name="Narusaka M."/>
            <person name="Seki M."/>
            <person name="Sakurai T."/>
            <person name="Satou M."/>
            <person name="Tamse R."/>
            <person name="Vaysberg M."/>
            <person name="Wallender E.K."/>
            <person name="Wong C."/>
            <person name="Yamamura Y."/>
            <person name="Yuan S."/>
            <person name="Shinozaki K."/>
            <person name="Davis R.W."/>
            <person name="Theologis A."/>
            <person name="Ecker J.R."/>
        </authorList>
    </citation>
    <scope>NUCLEOTIDE SEQUENCE [LARGE SCALE MRNA]</scope>
    <source>
        <strain>cv. Columbia</strain>
    </source>
</reference>
<reference key="4">
    <citation type="journal article" date="2009" name="DNA Res.">
        <title>Analysis of multiple occurrences of alternative splicing events in Arabidopsis thaliana using novel sequenced full-length cDNAs.</title>
        <authorList>
            <person name="Iida K."/>
            <person name="Fukami-Kobayashi K."/>
            <person name="Toyoda A."/>
            <person name="Sakaki Y."/>
            <person name="Kobayashi M."/>
            <person name="Seki M."/>
            <person name="Shinozaki K."/>
        </authorList>
    </citation>
    <scope>NUCLEOTIDE SEQUENCE [LARGE SCALE MRNA]</scope>
    <source>
        <strain>cv. Columbia</strain>
    </source>
</reference>
<reference key="5">
    <citation type="journal article" date="2002" name="Plant Physiol.">
        <title>Inositol phospholipid metabolism in Arabidopsis. Characterized and putative isoforms of inositol phospholipid kinase and phosphoinositide-specific phospholipase C.</title>
        <authorList>
            <person name="Mueller-Roeber B."/>
            <person name="Pical C."/>
        </authorList>
    </citation>
    <scope>GENE FAMILY</scope>
    <scope>NOMENCLATURE</scope>
</reference>
<reference key="6">
    <citation type="journal article" date="2008" name="Biochem. J.">
        <title>Characterization of a new family of protein kinases from Arabidopsis containing phosphoinositide 3/4-kinase and ubiquitin-like domains.</title>
        <authorList>
            <person name="Galvao R.M."/>
            <person name="Kota U."/>
            <person name="Soderblom E.J."/>
            <person name="Goshe M.B."/>
            <person name="Boss W.F."/>
        </authorList>
    </citation>
    <scope>FUNCTION</scope>
    <scope>CATALYTIC ACTIVITY</scope>
    <scope>INTERACTION WITH RPN10; UFD1 AND CDC48</scope>
    <scope>AUTOPHOSPHORYLATION</scope>
    <scope>GENE FAMILY</scope>
    <scope>MUTAGENESIS OF LYS-284</scope>
</reference>
<reference key="7">
    <citation type="journal article" date="2013" name="Biochem. J.">
        <title>Identification of novel candidate phosphatidic acid-binding proteins involved in the salt-stress response of Arabidopsis thaliana roots.</title>
        <authorList>
            <person name="McLoughlin F."/>
            <person name="Arisz S.A."/>
            <person name="Dekker H.L."/>
            <person name="Kramer G."/>
            <person name="de Koster C.G."/>
            <person name="Haring M.A."/>
            <person name="Munnik T."/>
            <person name="Testerink C."/>
        </authorList>
    </citation>
    <scope>IDENTIFICATION BY MASS SPECTROMETRY</scope>
    <scope>INDUCTION</scope>
    <scope>SUBCELLULAR LOCATION</scope>
</reference>
<protein>
    <recommendedName>
        <fullName evidence="7">Phosphatidylinositol 4-kinase gamma 4</fullName>
        <shortName evidence="7">AtPI4Kgamma4</shortName>
        <shortName evidence="7">PI-4Kgamma4</shortName>
        <shortName evidence="7">PI4K gamma 4</shortName>
        <ecNumber evidence="5">2.7.1.67</ecNumber>
    </recommendedName>
    <alternativeName>
        <fullName evidence="7">Ubiquitin-like domain kinase gamma 4</fullName>
        <shortName evidence="7">UbDK gamma 4</shortName>
    </alternativeName>
</protein>
<dbReference type="EC" id="2.7.1.67" evidence="5"/>
<dbReference type="EMBL" id="AC006418">
    <property type="protein sequence ID" value="AAD20161.1"/>
    <property type="molecule type" value="Genomic_DNA"/>
</dbReference>
<dbReference type="EMBL" id="AC006526">
    <property type="protein sequence ID" value="AAM15268.1"/>
    <property type="molecule type" value="Genomic_DNA"/>
</dbReference>
<dbReference type="EMBL" id="CP002685">
    <property type="protein sequence ID" value="AEC10708.1"/>
    <property type="molecule type" value="Genomic_DNA"/>
</dbReference>
<dbReference type="EMBL" id="CP002685">
    <property type="protein sequence ID" value="AEC10709.1"/>
    <property type="molecule type" value="Genomic_DNA"/>
</dbReference>
<dbReference type="EMBL" id="AF419566">
    <property type="protein sequence ID" value="AAL31898.1"/>
    <property type="molecule type" value="mRNA"/>
</dbReference>
<dbReference type="EMBL" id="BT002694">
    <property type="protein sequence ID" value="AAO11610.1"/>
    <property type="molecule type" value="mRNA"/>
</dbReference>
<dbReference type="EMBL" id="AK317284">
    <property type="protein sequence ID" value="BAH19960.1"/>
    <property type="molecule type" value="mRNA"/>
</dbReference>
<dbReference type="EMBL" id="AK317659">
    <property type="protein sequence ID" value="BAH20320.1"/>
    <property type="molecule type" value="mRNA"/>
</dbReference>
<dbReference type="PIR" id="F84903">
    <property type="entry name" value="F84903"/>
</dbReference>
<dbReference type="RefSeq" id="NP_566076.1">
    <molecule id="Q9ZPY9-1"/>
    <property type="nucleotide sequence ID" value="NM_130214.3"/>
</dbReference>
<dbReference type="RefSeq" id="NP_973700.1">
    <molecule id="Q9ZPY9-1"/>
    <property type="nucleotide sequence ID" value="NM_201971.3"/>
</dbReference>
<dbReference type="SMR" id="Q9ZPY9"/>
<dbReference type="BioGRID" id="4595">
    <property type="interactions" value="5"/>
</dbReference>
<dbReference type="FunCoup" id="Q9ZPY9">
    <property type="interactions" value="1178"/>
</dbReference>
<dbReference type="IntAct" id="Q9ZPY9">
    <property type="interactions" value="1"/>
</dbReference>
<dbReference type="STRING" id="3702.Q9ZPY9"/>
<dbReference type="PaxDb" id="3702-AT2G46500.1"/>
<dbReference type="EnsemblPlants" id="AT2G46500.1">
    <molecule id="Q9ZPY9-1"/>
    <property type="protein sequence ID" value="AT2G46500.1"/>
    <property type="gene ID" value="AT2G46500"/>
</dbReference>
<dbReference type="EnsemblPlants" id="AT2G46500.2">
    <molecule id="Q9ZPY9-1"/>
    <property type="protein sequence ID" value="AT2G46500.2"/>
    <property type="gene ID" value="AT2G46500"/>
</dbReference>
<dbReference type="GeneID" id="819260"/>
<dbReference type="Gramene" id="AT2G46500.1">
    <molecule id="Q9ZPY9-1"/>
    <property type="protein sequence ID" value="AT2G46500.1"/>
    <property type="gene ID" value="AT2G46500"/>
</dbReference>
<dbReference type="Gramene" id="AT2G46500.2">
    <molecule id="Q9ZPY9-1"/>
    <property type="protein sequence ID" value="AT2G46500.2"/>
    <property type="gene ID" value="AT2G46500"/>
</dbReference>
<dbReference type="KEGG" id="ath:AT2G46500"/>
<dbReference type="Araport" id="AT2G46500"/>
<dbReference type="TAIR" id="AT2G46500">
    <property type="gene designation" value="PI4K GAMMA 4"/>
</dbReference>
<dbReference type="eggNOG" id="KOG0001">
    <property type="taxonomic scope" value="Eukaryota"/>
</dbReference>
<dbReference type="eggNOG" id="KOG2381">
    <property type="taxonomic scope" value="Eukaryota"/>
</dbReference>
<dbReference type="HOGENOM" id="CLU_023603_0_0_1"/>
<dbReference type="InParanoid" id="Q9ZPY9"/>
<dbReference type="OMA" id="EYDSIDS"/>
<dbReference type="OrthoDB" id="5839at2759"/>
<dbReference type="PhylomeDB" id="Q9ZPY9"/>
<dbReference type="PRO" id="PR:Q9ZPY9"/>
<dbReference type="Proteomes" id="UP000006548">
    <property type="component" value="Chromosome 2"/>
</dbReference>
<dbReference type="ExpressionAtlas" id="Q9ZPY9">
    <property type="expression patterns" value="baseline and differential"/>
</dbReference>
<dbReference type="GO" id="GO:0016020">
    <property type="term" value="C:membrane"/>
    <property type="evidence" value="ECO:0007669"/>
    <property type="project" value="UniProtKB-SubCell"/>
</dbReference>
<dbReference type="GO" id="GO:0004430">
    <property type="term" value="F:1-phosphatidylinositol 4-kinase activity"/>
    <property type="evidence" value="ECO:0000314"/>
    <property type="project" value="TAIR"/>
</dbReference>
<dbReference type="GO" id="GO:0005524">
    <property type="term" value="F:ATP binding"/>
    <property type="evidence" value="ECO:0007669"/>
    <property type="project" value="UniProtKB-KW"/>
</dbReference>
<dbReference type="GO" id="GO:0004674">
    <property type="term" value="F:protein serine/threonine kinase activity"/>
    <property type="evidence" value="ECO:0000314"/>
    <property type="project" value="UniProtKB"/>
</dbReference>
<dbReference type="GO" id="GO:0071456">
    <property type="term" value="P:cellular response to hypoxia"/>
    <property type="evidence" value="ECO:0007007"/>
    <property type="project" value="TAIR"/>
</dbReference>
<dbReference type="GO" id="GO:0046854">
    <property type="term" value="P:phosphatidylinositol phosphate biosynthetic process"/>
    <property type="evidence" value="ECO:0000314"/>
    <property type="project" value="TAIR"/>
</dbReference>
<dbReference type="GO" id="GO:0046777">
    <property type="term" value="P:protein autophosphorylation"/>
    <property type="evidence" value="ECO:0000314"/>
    <property type="project" value="UniProtKB"/>
</dbReference>
<dbReference type="GO" id="GO:0009651">
    <property type="term" value="P:response to salt stress"/>
    <property type="evidence" value="ECO:0000314"/>
    <property type="project" value="UniProtKB"/>
</dbReference>
<dbReference type="CDD" id="cd17039">
    <property type="entry name" value="Ubl_ubiquitin_like"/>
    <property type="match status" value="1"/>
</dbReference>
<dbReference type="FunFam" id="3.10.20.90:FF:000307">
    <property type="entry name" value="Phosphatidylinositol 4-kinase gamma 4"/>
    <property type="match status" value="1"/>
</dbReference>
<dbReference type="FunFam" id="3.10.20.90:FF:000455">
    <property type="entry name" value="Phosphatidylinositol 4-kinase gamma 4"/>
    <property type="match status" value="1"/>
</dbReference>
<dbReference type="Gene3D" id="3.10.20.90">
    <property type="entry name" value="Phosphatidylinositol 3-kinase Catalytic Subunit, Chain A, domain 1"/>
    <property type="match status" value="2"/>
</dbReference>
<dbReference type="InterPro" id="IPR011009">
    <property type="entry name" value="Kinase-like_dom_sf"/>
</dbReference>
<dbReference type="InterPro" id="IPR044571">
    <property type="entry name" value="P4KG1-8"/>
</dbReference>
<dbReference type="InterPro" id="IPR000403">
    <property type="entry name" value="PI3/4_kinase_cat_dom"/>
</dbReference>
<dbReference type="InterPro" id="IPR000626">
    <property type="entry name" value="Ubiquitin-like_dom"/>
</dbReference>
<dbReference type="InterPro" id="IPR029071">
    <property type="entry name" value="Ubiquitin-like_domsf"/>
</dbReference>
<dbReference type="InterPro" id="IPR019956">
    <property type="entry name" value="Ubiquitin_dom"/>
</dbReference>
<dbReference type="PANTHER" id="PTHR45800">
    <property type="entry name" value="PHOSPHATIDYLINOSITOL 4-KINASE GAMMA"/>
    <property type="match status" value="1"/>
</dbReference>
<dbReference type="PANTHER" id="PTHR45800:SF24">
    <property type="entry name" value="PHOSPHATIDYLINOSITOL 4-KINASE GAMMA 4"/>
    <property type="match status" value="1"/>
</dbReference>
<dbReference type="Pfam" id="PF00454">
    <property type="entry name" value="PI3_PI4_kinase"/>
    <property type="match status" value="1"/>
</dbReference>
<dbReference type="Pfam" id="PF00240">
    <property type="entry name" value="ubiquitin"/>
    <property type="match status" value="2"/>
</dbReference>
<dbReference type="PRINTS" id="PR00348">
    <property type="entry name" value="UBIQUITIN"/>
</dbReference>
<dbReference type="SMART" id="SM00213">
    <property type="entry name" value="UBQ"/>
    <property type="match status" value="2"/>
</dbReference>
<dbReference type="SUPFAM" id="SSF56112">
    <property type="entry name" value="Protein kinase-like (PK-like)"/>
    <property type="match status" value="1"/>
</dbReference>
<dbReference type="SUPFAM" id="SSF54236">
    <property type="entry name" value="Ubiquitin-like"/>
    <property type="match status" value="2"/>
</dbReference>
<dbReference type="PROSITE" id="PS50290">
    <property type="entry name" value="PI3_4_KINASE_3"/>
    <property type="match status" value="1"/>
</dbReference>
<dbReference type="PROSITE" id="PS50053">
    <property type="entry name" value="UBIQUITIN_2"/>
    <property type="match status" value="2"/>
</dbReference>
<name>P4KG4_ARATH</name>
<accession>Q9ZPY9</accession>
<accession>B9DGU3</accession>
<accession>B9DHV3</accession>
<gene>
    <name evidence="7" type="primary">PI4KG4</name>
    <name evidence="7" type="synonym">PI4KGAMMA4</name>
    <name evidence="7" type="synonym">UBDKGAMMA4</name>
    <name evidence="9" type="ordered locus">At2g46500</name>
    <name evidence="11" type="ORF">F11C10.19</name>
    <name evidence="10" type="ORF">F13A10.3</name>
</gene>
<organism>
    <name type="scientific">Arabidopsis thaliana</name>
    <name type="common">Mouse-ear cress</name>
    <dbReference type="NCBI Taxonomy" id="3702"/>
    <lineage>
        <taxon>Eukaryota</taxon>
        <taxon>Viridiplantae</taxon>
        <taxon>Streptophyta</taxon>
        <taxon>Embryophyta</taxon>
        <taxon>Tracheophyta</taxon>
        <taxon>Spermatophyta</taxon>
        <taxon>Magnoliopsida</taxon>
        <taxon>eudicotyledons</taxon>
        <taxon>Gunneridae</taxon>
        <taxon>Pentapetalae</taxon>
        <taxon>rosids</taxon>
        <taxon>malvids</taxon>
        <taxon>Brassicales</taxon>
        <taxon>Brassicaceae</taxon>
        <taxon>Camelineae</taxon>
        <taxon>Arabidopsis</taxon>
    </lineage>
</organism>